<gene>
    <name type="ordered locus">MG293</name>
</gene>
<sequence>MHNKQLLLAHRGYSFIAPENTKLAFDLAFEYCFDGIELDVHLTKDEQLVIIHDETTLRTALVNKEVEFESLVSLKRDDHSAFFHLKIQFQSILTLKEFLDLYLDKFKLINIEIKTDQKPYLGIEKKLVDLVKGYGKKAIDKILFSSFNFESLQKVYDLDNSYKKGFLFWTKKQFETISTARIQKICQFLHPWTKIYEKYPQMIKKLNLPLNLWTVNSQNKFQQFLADNHVYAQIANKKFEIKIN</sequence>
<name>Y293_MYCGE</name>
<reference key="1">
    <citation type="journal article" date="1995" name="Science">
        <title>The minimal gene complement of Mycoplasma genitalium.</title>
        <authorList>
            <person name="Fraser C.M."/>
            <person name="Gocayne J.D."/>
            <person name="White O."/>
            <person name="Adams M.D."/>
            <person name="Clayton R.A."/>
            <person name="Fleischmann R.D."/>
            <person name="Bult C.J."/>
            <person name="Kerlavage A.R."/>
            <person name="Sutton G.G."/>
            <person name="Kelley J.M."/>
            <person name="Fritchman J.L."/>
            <person name="Weidman J.F."/>
            <person name="Small K.V."/>
            <person name="Sandusky M."/>
            <person name="Fuhrmann J.L."/>
            <person name="Nguyen D.T."/>
            <person name="Utterback T.R."/>
            <person name="Saudek D.M."/>
            <person name="Phillips C.A."/>
            <person name="Merrick J.M."/>
            <person name="Tomb J.-F."/>
            <person name="Dougherty B.A."/>
            <person name="Bott K.F."/>
            <person name="Hu P.-C."/>
            <person name="Lucier T.S."/>
            <person name="Peterson S.N."/>
            <person name="Smith H.O."/>
            <person name="Hutchison C.A. III"/>
            <person name="Venter J.C."/>
        </authorList>
    </citation>
    <scope>NUCLEOTIDE SEQUENCE [LARGE SCALE GENOMIC DNA]</scope>
    <source>
        <strain>ATCC 33530 / DSM 19775 / NCTC 10195 / G37</strain>
    </source>
</reference>
<reference key="2">
    <citation type="journal article" date="1993" name="J. Bacteriol.">
        <title>A survey of the Mycoplasma genitalium genome by using random sequencing.</title>
        <authorList>
            <person name="Peterson S.N."/>
            <person name="Hu P.-C."/>
            <person name="Bott K.F."/>
            <person name="Hutchison C.A. III"/>
        </authorList>
    </citation>
    <scope>NUCLEOTIDE SEQUENCE [GENOMIC DNA] OF 15-119</scope>
    <source>
        <strain>ATCC 33530 / DSM 19775 / NCTC 10195 / G37</strain>
    </source>
</reference>
<proteinExistence type="predicted"/>
<keyword id="KW-0378">Hydrolase</keyword>
<keyword id="KW-1185">Reference proteome</keyword>
<feature type="chain" id="PRO_0000210516" description="Uncharacterized protein MG293">
    <location>
        <begin position="1"/>
        <end position="244"/>
    </location>
</feature>
<feature type="domain" description="GP-PDE">
    <location>
        <begin position="5"/>
        <end position="244"/>
    </location>
</feature>
<dbReference type="EMBL" id="L43967">
    <property type="protein sequence ID" value="AAC71514.1"/>
    <property type="molecule type" value="Genomic_DNA"/>
</dbReference>
<dbReference type="EMBL" id="U02118">
    <property type="protein sequence ID" value="AAD12392.1"/>
    <property type="molecule type" value="Genomic_DNA"/>
</dbReference>
<dbReference type="PIR" id="D64232">
    <property type="entry name" value="D64232"/>
</dbReference>
<dbReference type="RefSeq" id="WP_010869413.1">
    <property type="nucleotide sequence ID" value="NC_000908.2"/>
</dbReference>
<dbReference type="SMR" id="P47535"/>
<dbReference type="FunCoup" id="P47535">
    <property type="interactions" value="91"/>
</dbReference>
<dbReference type="STRING" id="243273.MG_293"/>
<dbReference type="GeneID" id="88282456"/>
<dbReference type="KEGG" id="mge:MG_293"/>
<dbReference type="eggNOG" id="COG0584">
    <property type="taxonomic scope" value="Bacteria"/>
</dbReference>
<dbReference type="HOGENOM" id="CLU_030006_3_3_14"/>
<dbReference type="InParanoid" id="P47535"/>
<dbReference type="OrthoDB" id="384721at2"/>
<dbReference type="BioCyc" id="MGEN243273:G1GJ2-362-MONOMER"/>
<dbReference type="Proteomes" id="UP000000807">
    <property type="component" value="Chromosome"/>
</dbReference>
<dbReference type="GO" id="GO:0008081">
    <property type="term" value="F:phosphoric diester hydrolase activity"/>
    <property type="evidence" value="ECO:0007669"/>
    <property type="project" value="InterPro"/>
</dbReference>
<dbReference type="GO" id="GO:0006629">
    <property type="term" value="P:lipid metabolic process"/>
    <property type="evidence" value="ECO:0007669"/>
    <property type="project" value="InterPro"/>
</dbReference>
<dbReference type="CDD" id="cd08563">
    <property type="entry name" value="GDPD_TtGDE_like"/>
    <property type="match status" value="1"/>
</dbReference>
<dbReference type="Gene3D" id="3.20.20.190">
    <property type="entry name" value="Phosphatidylinositol (PI) phosphodiesterase"/>
    <property type="match status" value="1"/>
</dbReference>
<dbReference type="InterPro" id="IPR030395">
    <property type="entry name" value="GP_PDE_dom"/>
</dbReference>
<dbReference type="InterPro" id="IPR017946">
    <property type="entry name" value="PLC-like_Pdiesterase_TIM-brl"/>
</dbReference>
<dbReference type="PANTHER" id="PTHR46211:SF1">
    <property type="entry name" value="GLYCEROPHOSPHODIESTER PHOSPHODIESTERASE, CYTOPLASMIC"/>
    <property type="match status" value="1"/>
</dbReference>
<dbReference type="PANTHER" id="PTHR46211">
    <property type="entry name" value="GLYCEROPHOSPHORYL DIESTER PHOSPHODIESTERASE"/>
    <property type="match status" value="1"/>
</dbReference>
<dbReference type="Pfam" id="PF03009">
    <property type="entry name" value="GDPD"/>
    <property type="match status" value="1"/>
</dbReference>
<dbReference type="SUPFAM" id="SSF51695">
    <property type="entry name" value="PLC-like phosphodiesterases"/>
    <property type="match status" value="1"/>
</dbReference>
<dbReference type="PROSITE" id="PS51704">
    <property type="entry name" value="GP_PDE"/>
    <property type="match status" value="1"/>
</dbReference>
<accession>P47535</accession>
<comment type="similarity">
    <text evidence="1">To glycerophosphoryl diester phosphodiesterases (EC 3.1.4.46).</text>
</comment>
<comment type="similarity">
    <text evidence="1">To M.genitalium MG385.</text>
</comment>
<evidence type="ECO:0000305" key="1"/>
<protein>
    <recommendedName>
        <fullName>Uncharacterized protein MG293</fullName>
    </recommendedName>
</protein>
<organism>
    <name type="scientific">Mycoplasma genitalium (strain ATCC 33530 / DSM 19775 / NCTC 10195 / G37)</name>
    <name type="common">Mycoplasmoides genitalium</name>
    <dbReference type="NCBI Taxonomy" id="243273"/>
    <lineage>
        <taxon>Bacteria</taxon>
        <taxon>Bacillati</taxon>
        <taxon>Mycoplasmatota</taxon>
        <taxon>Mycoplasmoidales</taxon>
        <taxon>Mycoplasmoidaceae</taxon>
        <taxon>Mycoplasmoides</taxon>
    </lineage>
</organism>